<comment type="function">
    <text evidence="1">Catalyzes the transfer of the enolpyruvyl moiety of phosphoenolpyruvate (PEP) to the 5-hydroxyl of shikimate-3-phosphate (S3P) to produce enolpyruvyl shikimate-3-phosphate and inorganic phosphate.</text>
</comment>
<comment type="catalytic activity">
    <reaction evidence="1">
        <text>3-phosphoshikimate + phosphoenolpyruvate = 5-O-(1-carboxyvinyl)-3-phosphoshikimate + phosphate</text>
        <dbReference type="Rhea" id="RHEA:21256"/>
        <dbReference type="ChEBI" id="CHEBI:43474"/>
        <dbReference type="ChEBI" id="CHEBI:57701"/>
        <dbReference type="ChEBI" id="CHEBI:58702"/>
        <dbReference type="ChEBI" id="CHEBI:145989"/>
        <dbReference type="EC" id="2.5.1.19"/>
    </reaction>
    <physiologicalReaction direction="left-to-right" evidence="1">
        <dbReference type="Rhea" id="RHEA:21257"/>
    </physiologicalReaction>
</comment>
<comment type="pathway">
    <text evidence="1">Metabolic intermediate biosynthesis; chorismate biosynthesis; chorismate from D-erythrose 4-phosphate and phosphoenolpyruvate: step 6/7.</text>
</comment>
<comment type="subunit">
    <text evidence="1">Monomer.</text>
</comment>
<comment type="subcellular location">
    <subcellularLocation>
        <location evidence="1">Cytoplasm</location>
    </subcellularLocation>
</comment>
<comment type="similarity">
    <text evidence="1 3">Belongs to the EPSP synthase family.</text>
</comment>
<evidence type="ECO:0000255" key="1">
    <source>
        <dbReference type="HAMAP-Rule" id="MF_00210"/>
    </source>
</evidence>
<evidence type="ECO:0000303" key="2">
    <source>
    </source>
</evidence>
<evidence type="ECO:0000305" key="3"/>
<keyword id="KW-0028">Amino-acid biosynthesis</keyword>
<keyword id="KW-0057">Aromatic amino acid biosynthesis</keyword>
<keyword id="KW-0963">Cytoplasm</keyword>
<keyword id="KW-1185">Reference proteome</keyword>
<keyword id="KW-0808">Transferase</keyword>
<feature type="chain" id="PRO_0000088286" description="3-phosphoshikimate 1-carboxyvinyltransferase">
    <location>
        <begin position="1"/>
        <end position="427"/>
    </location>
</feature>
<feature type="active site" description="Proton acceptor" evidence="1">
    <location>
        <position position="313"/>
    </location>
</feature>
<feature type="binding site" evidence="1">
    <location>
        <position position="22"/>
    </location>
    <ligand>
        <name>3-phosphoshikimate</name>
        <dbReference type="ChEBI" id="CHEBI:145989"/>
    </ligand>
</feature>
<feature type="binding site" evidence="1">
    <location>
        <position position="22"/>
    </location>
    <ligand>
        <name>phosphoenolpyruvate</name>
        <dbReference type="ChEBI" id="CHEBI:58702"/>
    </ligand>
</feature>
<feature type="binding site" evidence="1">
    <location>
        <position position="23"/>
    </location>
    <ligand>
        <name>3-phosphoshikimate</name>
        <dbReference type="ChEBI" id="CHEBI:145989"/>
    </ligand>
</feature>
<feature type="binding site" evidence="1">
    <location>
        <position position="27"/>
    </location>
    <ligand>
        <name>3-phosphoshikimate</name>
        <dbReference type="ChEBI" id="CHEBI:145989"/>
    </ligand>
</feature>
<feature type="binding site" evidence="1">
    <location>
        <position position="96"/>
    </location>
    <ligand>
        <name>phosphoenolpyruvate</name>
        <dbReference type="ChEBI" id="CHEBI:58702"/>
    </ligand>
</feature>
<feature type="binding site" evidence="1">
    <location>
        <position position="124"/>
    </location>
    <ligand>
        <name>phosphoenolpyruvate</name>
        <dbReference type="ChEBI" id="CHEBI:58702"/>
    </ligand>
</feature>
<feature type="binding site" evidence="1">
    <location>
        <position position="169"/>
    </location>
    <ligand>
        <name>3-phosphoshikimate</name>
        <dbReference type="ChEBI" id="CHEBI:145989"/>
    </ligand>
</feature>
<feature type="binding site" evidence="1">
    <location>
        <position position="170"/>
    </location>
    <ligand>
        <name>3-phosphoshikimate</name>
        <dbReference type="ChEBI" id="CHEBI:145989"/>
    </ligand>
</feature>
<feature type="binding site" evidence="1">
    <location>
        <position position="171"/>
    </location>
    <ligand>
        <name>3-phosphoshikimate</name>
        <dbReference type="ChEBI" id="CHEBI:145989"/>
    </ligand>
</feature>
<feature type="binding site" evidence="1">
    <location>
        <position position="171"/>
    </location>
    <ligand>
        <name>phosphoenolpyruvate</name>
        <dbReference type="ChEBI" id="CHEBI:58702"/>
    </ligand>
</feature>
<feature type="binding site" evidence="1">
    <location>
        <position position="197"/>
    </location>
    <ligand>
        <name>3-phosphoshikimate</name>
        <dbReference type="ChEBI" id="CHEBI:145989"/>
    </ligand>
</feature>
<feature type="binding site" evidence="1">
    <location>
        <position position="313"/>
    </location>
    <ligand>
        <name>3-phosphoshikimate</name>
        <dbReference type="ChEBI" id="CHEBI:145989"/>
    </ligand>
</feature>
<feature type="binding site" evidence="1">
    <location>
        <position position="336"/>
    </location>
    <ligand>
        <name>3-phosphoshikimate</name>
        <dbReference type="ChEBI" id="CHEBI:145989"/>
    </ligand>
</feature>
<feature type="binding site" evidence="1">
    <location>
        <position position="340"/>
    </location>
    <ligand>
        <name>3-phosphoshikimate</name>
        <dbReference type="ChEBI" id="CHEBI:145989"/>
    </ligand>
</feature>
<feature type="binding site" evidence="1">
    <location>
        <position position="344"/>
    </location>
    <ligand>
        <name>phosphoenolpyruvate</name>
        <dbReference type="ChEBI" id="CHEBI:58702"/>
    </ligand>
</feature>
<feature type="binding site" evidence="1">
    <location>
        <position position="386"/>
    </location>
    <ligand>
        <name>phosphoenolpyruvate</name>
        <dbReference type="ChEBI" id="CHEBI:58702"/>
    </ligand>
</feature>
<feature type="binding site" evidence="1">
    <location>
        <position position="411"/>
    </location>
    <ligand>
        <name>phosphoenolpyruvate</name>
        <dbReference type="ChEBI" id="CHEBI:58702"/>
    </ligand>
</feature>
<feature type="sequence variant" description="Confers glyphosate inhibition." evidence="2">
    <original>P</original>
    <variation>S</variation>
    <location>
        <position position="101"/>
    </location>
</feature>
<feature type="sequence conflict" description="In Ref. 1; AAA27028 and 2; CAA71382." evidence="3" ref="1 2">
    <original>A</original>
    <variation>P</variation>
    <location>
        <position position="35"/>
    </location>
</feature>
<name>AROA_SALTY</name>
<proteinExistence type="inferred from homology"/>
<protein>
    <recommendedName>
        <fullName evidence="1">3-phosphoshikimate 1-carboxyvinyltransferase</fullName>
        <ecNumber evidence="1">2.5.1.19</ecNumber>
    </recommendedName>
    <alternativeName>
        <fullName evidence="1">5-enolpyruvylshikimate-3-phosphate synthase</fullName>
        <shortName evidence="1">EPSP synthase</shortName>
        <shortName evidence="1">EPSPS</shortName>
    </alternativeName>
</protein>
<gene>
    <name evidence="1" type="primary">aroA</name>
    <name type="ordered locus">STM0978</name>
</gene>
<accession>P07637</accession>
<reference key="1">
    <citation type="journal article" date="1985" name="J. Biol. Chem.">
        <title>A single amino acid substitution in the enzyme 5-enolpyruvylshikimate-3-phosphate synthase confers resistance to the herbicide glyphosate.</title>
        <authorList>
            <person name="Stalker D.M."/>
            <person name="Hiatt W.R."/>
            <person name="Comai L."/>
        </authorList>
    </citation>
    <scope>NUCLEOTIDE SEQUENCE [GENOMIC DNA]</scope>
</reference>
<reference key="2">
    <citation type="submission" date="1997-01" db="EMBL/GenBank/DDBJ databases">
        <authorList>
            <person name="Mouslim C."/>
            <person name="Flores A."/>
            <person name="Cano D.A."/>
            <person name="Casadesus J."/>
        </authorList>
    </citation>
    <scope>NUCLEOTIDE SEQUENCE [GENOMIC DNA]</scope>
    <source>
        <strain>LT2 / SGSC1412 / ATCC 700720</strain>
    </source>
</reference>
<reference key="3">
    <citation type="journal article" date="2001" name="Nature">
        <title>Complete genome sequence of Salmonella enterica serovar Typhimurium LT2.</title>
        <authorList>
            <person name="McClelland M."/>
            <person name="Sanderson K.E."/>
            <person name="Spieth J."/>
            <person name="Clifton S.W."/>
            <person name="Latreille P."/>
            <person name="Courtney L."/>
            <person name="Porwollik S."/>
            <person name="Ali J."/>
            <person name="Dante M."/>
            <person name="Du F."/>
            <person name="Hou S."/>
            <person name="Layman D."/>
            <person name="Leonard S."/>
            <person name="Nguyen C."/>
            <person name="Scott K."/>
            <person name="Holmes A."/>
            <person name="Grewal N."/>
            <person name="Mulvaney E."/>
            <person name="Ryan E."/>
            <person name="Sun H."/>
            <person name="Florea L."/>
            <person name="Miller W."/>
            <person name="Stoneking T."/>
            <person name="Nhan M."/>
            <person name="Waterston R."/>
            <person name="Wilson R.K."/>
        </authorList>
    </citation>
    <scope>NUCLEOTIDE SEQUENCE [LARGE SCALE GENOMIC DNA]</scope>
    <source>
        <strain>LT2 / SGSC1412 / ATCC 700720</strain>
    </source>
</reference>
<dbReference type="EC" id="2.5.1.19" evidence="1"/>
<dbReference type="EMBL" id="M10947">
    <property type="protein sequence ID" value="AAA27028.1"/>
    <property type="molecule type" value="Genomic_DNA"/>
</dbReference>
<dbReference type="EMBL" id="Y10355">
    <property type="protein sequence ID" value="CAA71382.1"/>
    <property type="molecule type" value="Genomic_DNA"/>
</dbReference>
<dbReference type="EMBL" id="AE006468">
    <property type="protein sequence ID" value="AAL19912.1"/>
    <property type="molecule type" value="Genomic_DNA"/>
</dbReference>
<dbReference type="PIR" id="A22566">
    <property type="entry name" value="XUEBVS"/>
</dbReference>
<dbReference type="RefSeq" id="NP_459953.1">
    <property type="nucleotide sequence ID" value="NC_003197.2"/>
</dbReference>
<dbReference type="RefSeq" id="WP_000445178.1">
    <property type="nucleotide sequence ID" value="NC_003197.2"/>
</dbReference>
<dbReference type="SMR" id="P07637"/>
<dbReference type="STRING" id="99287.STM0978"/>
<dbReference type="PaxDb" id="99287-STM0978"/>
<dbReference type="GeneID" id="1252496"/>
<dbReference type="KEGG" id="stm:STM0978"/>
<dbReference type="PATRIC" id="fig|99287.12.peg.1031"/>
<dbReference type="HOGENOM" id="CLU_024321_0_0_6"/>
<dbReference type="OMA" id="YEDHRMA"/>
<dbReference type="PhylomeDB" id="P07637"/>
<dbReference type="BioCyc" id="SENT99287:STM0978-MONOMER"/>
<dbReference type="UniPathway" id="UPA00053">
    <property type="reaction ID" value="UER00089"/>
</dbReference>
<dbReference type="PHI-base" id="PHI:2624"/>
<dbReference type="PHI-base" id="PHI:6460"/>
<dbReference type="PHI-base" id="PHI:6586"/>
<dbReference type="Proteomes" id="UP000001014">
    <property type="component" value="Chromosome"/>
</dbReference>
<dbReference type="GO" id="GO:0005737">
    <property type="term" value="C:cytoplasm"/>
    <property type="evidence" value="ECO:0007669"/>
    <property type="project" value="UniProtKB-SubCell"/>
</dbReference>
<dbReference type="GO" id="GO:0003866">
    <property type="term" value="F:3-phosphoshikimate 1-carboxyvinyltransferase activity"/>
    <property type="evidence" value="ECO:0000318"/>
    <property type="project" value="GO_Central"/>
</dbReference>
<dbReference type="GO" id="GO:0008652">
    <property type="term" value="P:amino acid biosynthetic process"/>
    <property type="evidence" value="ECO:0007669"/>
    <property type="project" value="UniProtKB-KW"/>
</dbReference>
<dbReference type="GO" id="GO:0009073">
    <property type="term" value="P:aromatic amino acid family biosynthetic process"/>
    <property type="evidence" value="ECO:0007669"/>
    <property type="project" value="UniProtKB-KW"/>
</dbReference>
<dbReference type="GO" id="GO:0009423">
    <property type="term" value="P:chorismate biosynthetic process"/>
    <property type="evidence" value="ECO:0000318"/>
    <property type="project" value="GO_Central"/>
</dbReference>
<dbReference type="FunFam" id="3.65.10.10:FF:000003">
    <property type="entry name" value="3-phosphoshikimate 1-carboxyvinyltransferase"/>
    <property type="match status" value="1"/>
</dbReference>
<dbReference type="FunFam" id="3.65.10.10:FF:000004">
    <property type="entry name" value="3-phosphoshikimate 1-carboxyvinyltransferase"/>
    <property type="match status" value="1"/>
</dbReference>
<dbReference type="Gene3D" id="3.65.10.10">
    <property type="entry name" value="Enolpyruvate transferase domain"/>
    <property type="match status" value="2"/>
</dbReference>
<dbReference type="HAMAP" id="MF_00210">
    <property type="entry name" value="EPSP_synth"/>
    <property type="match status" value="1"/>
</dbReference>
<dbReference type="InterPro" id="IPR001986">
    <property type="entry name" value="Enolpyruvate_Tfrase_dom"/>
</dbReference>
<dbReference type="InterPro" id="IPR036968">
    <property type="entry name" value="Enolpyruvate_Tfrase_sf"/>
</dbReference>
<dbReference type="InterPro" id="IPR006264">
    <property type="entry name" value="EPSP_synthase"/>
</dbReference>
<dbReference type="InterPro" id="IPR023193">
    <property type="entry name" value="EPSP_synthase_CS"/>
</dbReference>
<dbReference type="InterPro" id="IPR013792">
    <property type="entry name" value="RNA3'P_cycl/enolpyr_Trfase_a/b"/>
</dbReference>
<dbReference type="NCBIfam" id="TIGR01356">
    <property type="entry name" value="aroA"/>
    <property type="match status" value="1"/>
</dbReference>
<dbReference type="PANTHER" id="PTHR21090">
    <property type="entry name" value="AROM/DEHYDROQUINATE SYNTHASE"/>
    <property type="match status" value="1"/>
</dbReference>
<dbReference type="PANTHER" id="PTHR21090:SF5">
    <property type="entry name" value="PENTAFUNCTIONAL AROM POLYPEPTIDE"/>
    <property type="match status" value="1"/>
</dbReference>
<dbReference type="Pfam" id="PF00275">
    <property type="entry name" value="EPSP_synthase"/>
    <property type="match status" value="1"/>
</dbReference>
<dbReference type="PIRSF" id="PIRSF000505">
    <property type="entry name" value="EPSPS"/>
    <property type="match status" value="1"/>
</dbReference>
<dbReference type="SUPFAM" id="SSF55205">
    <property type="entry name" value="EPT/RTPC-like"/>
    <property type="match status" value="1"/>
</dbReference>
<dbReference type="PROSITE" id="PS00104">
    <property type="entry name" value="EPSP_SYNTHASE_1"/>
    <property type="match status" value="1"/>
</dbReference>
<dbReference type="PROSITE" id="PS00885">
    <property type="entry name" value="EPSP_SYNTHASE_2"/>
    <property type="match status" value="1"/>
</dbReference>
<sequence length="427" mass="46132">MESLTLQPIARVDGAINLPGSKSVSNRALLLAALACGKTALTNLLDSDDVRHMLNALSALGINYTLSADRTRCDITGNGGALRAPGALELFLGNAGTAMRPLAAALCLGQNEIVLTGEPRMKERPIGHLVDSLRQGGANIDYLEQENYPPLRLRGGFTGGDIEVDGSVSSQFLTALLMTAPLAPKDTIIRVKGELVSKPYIDITLNLMKTFGVEIANHHYQQFVVKGGQQYHSPGRYLVEGDASSASYFLAAGAIKGGTVKVTGIGRKSMQGDIRFADVLEKMGATITWGDDFIACTRGELHAIDMDMNHIPDAAMTIATTALFAKGTTTLRNIYNWRVKETDRLFAMATELRKVGAEVEEGHDYIRITPPAKLQHADIGTYNDHRMAMCFSLVALSDTPVTILDPKCTAKTFPDYFEQLARMSTPA</sequence>
<organism>
    <name type="scientific">Salmonella typhimurium (strain LT2 / SGSC1412 / ATCC 700720)</name>
    <dbReference type="NCBI Taxonomy" id="99287"/>
    <lineage>
        <taxon>Bacteria</taxon>
        <taxon>Pseudomonadati</taxon>
        <taxon>Pseudomonadota</taxon>
        <taxon>Gammaproteobacteria</taxon>
        <taxon>Enterobacterales</taxon>
        <taxon>Enterobacteriaceae</taxon>
        <taxon>Salmonella</taxon>
    </lineage>
</organism>